<accession>Q9VXY4</accession>
<accession>Q8MRV0</accession>
<protein>
    <recommendedName>
        <fullName>Translation machinery-associated protein 16 homolog</fullName>
    </recommendedName>
</protein>
<gene>
    <name type="ORF">CG15027</name>
</gene>
<feature type="chain" id="PRO_0000321564" description="Translation machinery-associated protein 16 homolog">
    <location>
        <begin position="1"/>
        <end position="180"/>
    </location>
</feature>
<feature type="region of interest" description="Disordered" evidence="1">
    <location>
        <begin position="1"/>
        <end position="32"/>
    </location>
</feature>
<feature type="compositionally biased region" description="Basic and acidic residues" evidence="1">
    <location>
        <begin position="1"/>
        <end position="12"/>
    </location>
</feature>
<feature type="compositionally biased region" description="Basic residues" evidence="1">
    <location>
        <begin position="13"/>
        <end position="32"/>
    </location>
</feature>
<feature type="sequence conflict" description="In Ref. 3; AAM51118." evidence="2" ref="3">
    <original>R</original>
    <variation>T</variation>
    <location>
        <position position="66"/>
    </location>
</feature>
<comment type="similarity">
    <text evidence="2">Belongs to the TMA16 family.</text>
</comment>
<name>TMA16_DROME</name>
<proteinExistence type="evidence at transcript level"/>
<keyword id="KW-1185">Reference proteome</keyword>
<dbReference type="EMBL" id="AE014298">
    <property type="protein sequence ID" value="AAF48422.2"/>
    <property type="molecule type" value="Genomic_DNA"/>
</dbReference>
<dbReference type="EMBL" id="AY119258">
    <property type="protein sequence ID" value="AAM51118.1"/>
    <property type="molecule type" value="mRNA"/>
</dbReference>
<dbReference type="RefSeq" id="NP_572999.1">
    <property type="nucleotide sequence ID" value="NM_132771.3"/>
</dbReference>
<dbReference type="SMR" id="Q9VXY4"/>
<dbReference type="BioGRID" id="58795">
    <property type="interactions" value="1"/>
</dbReference>
<dbReference type="FunCoup" id="Q9VXY4">
    <property type="interactions" value="1156"/>
</dbReference>
<dbReference type="IntAct" id="Q9VXY4">
    <property type="interactions" value="1"/>
</dbReference>
<dbReference type="STRING" id="7227.FBpp0073782"/>
<dbReference type="PaxDb" id="7227-FBpp0073782"/>
<dbReference type="DNASU" id="32440"/>
<dbReference type="EnsemblMetazoa" id="FBtr0073965">
    <property type="protein sequence ID" value="FBpp0073782"/>
    <property type="gene ID" value="FBgn0030611"/>
</dbReference>
<dbReference type="GeneID" id="32440"/>
<dbReference type="KEGG" id="dme:Dmel_CG15027"/>
<dbReference type="UCSC" id="CG15027-RA">
    <property type="organism name" value="d. melanogaster"/>
</dbReference>
<dbReference type="AGR" id="FB:FBgn0030611"/>
<dbReference type="FlyBase" id="FBgn0030611">
    <property type="gene designation" value="CG15027"/>
</dbReference>
<dbReference type="VEuPathDB" id="VectorBase:FBgn0030611"/>
<dbReference type="eggNOG" id="ENOG502RXYZ">
    <property type="taxonomic scope" value="Eukaryota"/>
</dbReference>
<dbReference type="GeneTree" id="ENSGT00390000004179"/>
<dbReference type="HOGENOM" id="CLU_105581_0_0_1"/>
<dbReference type="InParanoid" id="Q9VXY4"/>
<dbReference type="OMA" id="SWFLGQI"/>
<dbReference type="OrthoDB" id="270284at2759"/>
<dbReference type="PhylomeDB" id="Q9VXY4"/>
<dbReference type="BioGRID-ORCS" id="32440">
    <property type="hits" value="0 hits in 1 CRISPR screen"/>
</dbReference>
<dbReference type="GenomeRNAi" id="32440"/>
<dbReference type="PRO" id="PR:Q9VXY4"/>
<dbReference type="Proteomes" id="UP000000803">
    <property type="component" value="Chromosome X"/>
</dbReference>
<dbReference type="Bgee" id="FBgn0030611">
    <property type="expression patterns" value="Expressed in adult class III enteroendocrine cell in adult midgut (Drosophila) and 102 other cell types or tissues"/>
</dbReference>
<dbReference type="ExpressionAtlas" id="Q9VXY4">
    <property type="expression patterns" value="baseline and differential"/>
</dbReference>
<dbReference type="GO" id="GO:0005634">
    <property type="term" value="C:nucleus"/>
    <property type="evidence" value="ECO:0000318"/>
    <property type="project" value="GO_Central"/>
</dbReference>
<dbReference type="FunFam" id="1.20.1440.170:FF:000001">
    <property type="entry name" value="Translation machinery-associated 16 homolog"/>
    <property type="match status" value="1"/>
</dbReference>
<dbReference type="Gene3D" id="1.20.1440.170">
    <property type="entry name" value="Translation machinery-associated protein 16-like"/>
    <property type="match status" value="1"/>
</dbReference>
<dbReference type="InterPro" id="IPR021346">
    <property type="entry name" value="Tma16"/>
</dbReference>
<dbReference type="InterPro" id="IPR038356">
    <property type="entry name" value="Tma16_sf"/>
</dbReference>
<dbReference type="PANTHER" id="PTHR13349">
    <property type="entry name" value="TRANSLATION MACHINERY-ASSOCIATED PROTEIN 16"/>
    <property type="match status" value="1"/>
</dbReference>
<dbReference type="PANTHER" id="PTHR13349:SF2">
    <property type="entry name" value="TRANSLATION MACHINERY-ASSOCIATED PROTEIN 16"/>
    <property type="match status" value="1"/>
</dbReference>
<dbReference type="Pfam" id="PF11176">
    <property type="entry name" value="Tma16"/>
    <property type="match status" value="1"/>
</dbReference>
<organism>
    <name type="scientific">Drosophila melanogaster</name>
    <name type="common">Fruit fly</name>
    <dbReference type="NCBI Taxonomy" id="7227"/>
    <lineage>
        <taxon>Eukaryota</taxon>
        <taxon>Metazoa</taxon>
        <taxon>Ecdysozoa</taxon>
        <taxon>Arthropoda</taxon>
        <taxon>Hexapoda</taxon>
        <taxon>Insecta</taxon>
        <taxon>Pterygota</taxon>
        <taxon>Neoptera</taxon>
        <taxon>Endopterygota</taxon>
        <taxon>Diptera</taxon>
        <taxon>Brachycera</taxon>
        <taxon>Muscomorpha</taxon>
        <taxon>Ephydroidea</taxon>
        <taxon>Drosophilidae</taxon>
        <taxon>Drosophila</taxon>
        <taxon>Sophophora</taxon>
    </lineage>
</organism>
<reference key="1">
    <citation type="journal article" date="2000" name="Science">
        <title>The genome sequence of Drosophila melanogaster.</title>
        <authorList>
            <person name="Adams M.D."/>
            <person name="Celniker S.E."/>
            <person name="Holt R.A."/>
            <person name="Evans C.A."/>
            <person name="Gocayne J.D."/>
            <person name="Amanatides P.G."/>
            <person name="Scherer S.E."/>
            <person name="Li P.W."/>
            <person name="Hoskins R.A."/>
            <person name="Galle R.F."/>
            <person name="George R.A."/>
            <person name="Lewis S.E."/>
            <person name="Richards S."/>
            <person name="Ashburner M."/>
            <person name="Henderson S.N."/>
            <person name="Sutton G.G."/>
            <person name="Wortman J.R."/>
            <person name="Yandell M.D."/>
            <person name="Zhang Q."/>
            <person name="Chen L.X."/>
            <person name="Brandon R.C."/>
            <person name="Rogers Y.-H.C."/>
            <person name="Blazej R.G."/>
            <person name="Champe M."/>
            <person name="Pfeiffer B.D."/>
            <person name="Wan K.H."/>
            <person name="Doyle C."/>
            <person name="Baxter E.G."/>
            <person name="Helt G."/>
            <person name="Nelson C.R."/>
            <person name="Miklos G.L.G."/>
            <person name="Abril J.F."/>
            <person name="Agbayani A."/>
            <person name="An H.-J."/>
            <person name="Andrews-Pfannkoch C."/>
            <person name="Baldwin D."/>
            <person name="Ballew R.M."/>
            <person name="Basu A."/>
            <person name="Baxendale J."/>
            <person name="Bayraktaroglu L."/>
            <person name="Beasley E.M."/>
            <person name="Beeson K.Y."/>
            <person name="Benos P.V."/>
            <person name="Berman B.P."/>
            <person name="Bhandari D."/>
            <person name="Bolshakov S."/>
            <person name="Borkova D."/>
            <person name="Botchan M.R."/>
            <person name="Bouck J."/>
            <person name="Brokstein P."/>
            <person name="Brottier P."/>
            <person name="Burtis K.C."/>
            <person name="Busam D.A."/>
            <person name="Butler H."/>
            <person name="Cadieu E."/>
            <person name="Center A."/>
            <person name="Chandra I."/>
            <person name="Cherry J.M."/>
            <person name="Cawley S."/>
            <person name="Dahlke C."/>
            <person name="Davenport L.B."/>
            <person name="Davies P."/>
            <person name="de Pablos B."/>
            <person name="Delcher A."/>
            <person name="Deng Z."/>
            <person name="Mays A.D."/>
            <person name="Dew I."/>
            <person name="Dietz S.M."/>
            <person name="Dodson K."/>
            <person name="Doup L.E."/>
            <person name="Downes M."/>
            <person name="Dugan-Rocha S."/>
            <person name="Dunkov B.C."/>
            <person name="Dunn P."/>
            <person name="Durbin K.J."/>
            <person name="Evangelista C.C."/>
            <person name="Ferraz C."/>
            <person name="Ferriera S."/>
            <person name="Fleischmann W."/>
            <person name="Fosler C."/>
            <person name="Gabrielian A.E."/>
            <person name="Garg N.S."/>
            <person name="Gelbart W.M."/>
            <person name="Glasser K."/>
            <person name="Glodek A."/>
            <person name="Gong F."/>
            <person name="Gorrell J.H."/>
            <person name="Gu Z."/>
            <person name="Guan P."/>
            <person name="Harris M."/>
            <person name="Harris N.L."/>
            <person name="Harvey D.A."/>
            <person name="Heiman T.J."/>
            <person name="Hernandez J.R."/>
            <person name="Houck J."/>
            <person name="Hostin D."/>
            <person name="Houston K.A."/>
            <person name="Howland T.J."/>
            <person name="Wei M.-H."/>
            <person name="Ibegwam C."/>
            <person name="Jalali M."/>
            <person name="Kalush F."/>
            <person name="Karpen G.H."/>
            <person name="Ke Z."/>
            <person name="Kennison J.A."/>
            <person name="Ketchum K.A."/>
            <person name="Kimmel B.E."/>
            <person name="Kodira C.D."/>
            <person name="Kraft C.L."/>
            <person name="Kravitz S."/>
            <person name="Kulp D."/>
            <person name="Lai Z."/>
            <person name="Lasko P."/>
            <person name="Lei Y."/>
            <person name="Levitsky A.A."/>
            <person name="Li J.H."/>
            <person name="Li Z."/>
            <person name="Liang Y."/>
            <person name="Lin X."/>
            <person name="Liu X."/>
            <person name="Mattei B."/>
            <person name="McIntosh T.C."/>
            <person name="McLeod M.P."/>
            <person name="McPherson D."/>
            <person name="Merkulov G."/>
            <person name="Milshina N.V."/>
            <person name="Mobarry C."/>
            <person name="Morris J."/>
            <person name="Moshrefi A."/>
            <person name="Mount S.M."/>
            <person name="Moy M."/>
            <person name="Murphy B."/>
            <person name="Murphy L."/>
            <person name="Muzny D.M."/>
            <person name="Nelson D.L."/>
            <person name="Nelson D.R."/>
            <person name="Nelson K.A."/>
            <person name="Nixon K."/>
            <person name="Nusskern D.R."/>
            <person name="Pacleb J.M."/>
            <person name="Palazzolo M."/>
            <person name="Pittman G.S."/>
            <person name="Pan S."/>
            <person name="Pollard J."/>
            <person name="Puri V."/>
            <person name="Reese M.G."/>
            <person name="Reinert K."/>
            <person name="Remington K."/>
            <person name="Saunders R.D.C."/>
            <person name="Scheeler F."/>
            <person name="Shen H."/>
            <person name="Shue B.C."/>
            <person name="Siden-Kiamos I."/>
            <person name="Simpson M."/>
            <person name="Skupski M.P."/>
            <person name="Smith T.J."/>
            <person name="Spier E."/>
            <person name="Spradling A.C."/>
            <person name="Stapleton M."/>
            <person name="Strong R."/>
            <person name="Sun E."/>
            <person name="Svirskas R."/>
            <person name="Tector C."/>
            <person name="Turner R."/>
            <person name="Venter E."/>
            <person name="Wang A.H."/>
            <person name="Wang X."/>
            <person name="Wang Z.-Y."/>
            <person name="Wassarman D.A."/>
            <person name="Weinstock G.M."/>
            <person name="Weissenbach J."/>
            <person name="Williams S.M."/>
            <person name="Woodage T."/>
            <person name="Worley K.C."/>
            <person name="Wu D."/>
            <person name="Yang S."/>
            <person name="Yao Q.A."/>
            <person name="Ye J."/>
            <person name="Yeh R.-F."/>
            <person name="Zaveri J.S."/>
            <person name="Zhan M."/>
            <person name="Zhang G."/>
            <person name="Zhao Q."/>
            <person name="Zheng L."/>
            <person name="Zheng X.H."/>
            <person name="Zhong F.N."/>
            <person name="Zhong W."/>
            <person name="Zhou X."/>
            <person name="Zhu S.C."/>
            <person name="Zhu X."/>
            <person name="Smith H.O."/>
            <person name="Gibbs R.A."/>
            <person name="Myers E.W."/>
            <person name="Rubin G.M."/>
            <person name="Venter J.C."/>
        </authorList>
    </citation>
    <scope>NUCLEOTIDE SEQUENCE [LARGE SCALE GENOMIC DNA]</scope>
    <source>
        <strain>Berkeley</strain>
    </source>
</reference>
<reference key="2">
    <citation type="journal article" date="2002" name="Genome Biol.">
        <title>Annotation of the Drosophila melanogaster euchromatic genome: a systematic review.</title>
        <authorList>
            <person name="Misra S."/>
            <person name="Crosby M.A."/>
            <person name="Mungall C.J."/>
            <person name="Matthews B.B."/>
            <person name="Campbell K.S."/>
            <person name="Hradecky P."/>
            <person name="Huang Y."/>
            <person name="Kaminker J.S."/>
            <person name="Millburn G.H."/>
            <person name="Prochnik S.E."/>
            <person name="Smith C.D."/>
            <person name="Tupy J.L."/>
            <person name="Whitfield E.J."/>
            <person name="Bayraktaroglu L."/>
            <person name="Berman B.P."/>
            <person name="Bettencourt B.R."/>
            <person name="Celniker S.E."/>
            <person name="de Grey A.D.N.J."/>
            <person name="Drysdale R.A."/>
            <person name="Harris N.L."/>
            <person name="Richter J."/>
            <person name="Russo S."/>
            <person name="Schroeder A.J."/>
            <person name="Shu S.Q."/>
            <person name="Stapleton M."/>
            <person name="Yamada C."/>
            <person name="Ashburner M."/>
            <person name="Gelbart W.M."/>
            <person name="Rubin G.M."/>
            <person name="Lewis S.E."/>
        </authorList>
    </citation>
    <scope>GENOME REANNOTATION</scope>
    <source>
        <strain>Berkeley</strain>
    </source>
</reference>
<reference key="3">
    <citation type="journal article" date="2002" name="Genome Biol.">
        <title>A Drosophila full-length cDNA resource.</title>
        <authorList>
            <person name="Stapleton M."/>
            <person name="Carlson J.W."/>
            <person name="Brokstein P."/>
            <person name="Yu C."/>
            <person name="Champe M."/>
            <person name="George R.A."/>
            <person name="Guarin H."/>
            <person name="Kronmiller B."/>
            <person name="Pacleb J.M."/>
            <person name="Park S."/>
            <person name="Wan K.H."/>
            <person name="Rubin G.M."/>
            <person name="Celniker S.E."/>
        </authorList>
    </citation>
    <scope>NUCLEOTIDE SEQUENCE [LARGE SCALE MRNA]</scope>
    <source>
        <strain>Berkeley</strain>
        <tissue>Embryo</tissue>
    </source>
</reference>
<evidence type="ECO:0000256" key="1">
    <source>
        <dbReference type="SAM" id="MobiDB-lite"/>
    </source>
</evidence>
<evidence type="ECO:0000305" key="2"/>
<sequence length="180" mass="21136">MTNLRKELEKCKHPNSRKTKALGKKARRQNNKHKVRLGHAIKSNITGEKLSWFLGQIDEGRTEPLRPQELEDLIELYFTRFDEELEQINLKQSIGKHRANQHAARKDVITMTLEKERNEFRTGGLELMNLCDPLKLKMLRDWDGSALSVQHLKLDLVSYNMLQRLKEQSKKKETSEQMET</sequence>